<keyword id="KW-0249">Electron transport</keyword>
<keyword id="KW-0349">Heme</keyword>
<keyword id="KW-0408">Iron</keyword>
<keyword id="KW-0472">Membrane</keyword>
<keyword id="KW-0479">Metal-binding</keyword>
<keyword id="KW-0496">Mitochondrion</keyword>
<keyword id="KW-0999">Mitochondrion inner membrane</keyword>
<keyword id="KW-0679">Respiratory chain</keyword>
<keyword id="KW-0812">Transmembrane</keyword>
<keyword id="KW-1133">Transmembrane helix</keyword>
<keyword id="KW-0813">Transport</keyword>
<keyword id="KW-0830">Ubiquinone</keyword>
<dbReference type="EMBL" id="AF215813">
    <property type="protein sequence ID" value="AAL55634.1"/>
    <property type="molecule type" value="Genomic_DNA"/>
</dbReference>
<dbReference type="SMR" id="Q8WEK2"/>
<dbReference type="GO" id="GO:0005743">
    <property type="term" value="C:mitochondrial inner membrane"/>
    <property type="evidence" value="ECO:0007669"/>
    <property type="project" value="UniProtKB-SubCell"/>
</dbReference>
<dbReference type="GO" id="GO:0045275">
    <property type="term" value="C:respiratory chain complex III"/>
    <property type="evidence" value="ECO:0007669"/>
    <property type="project" value="InterPro"/>
</dbReference>
<dbReference type="GO" id="GO:0046872">
    <property type="term" value="F:metal ion binding"/>
    <property type="evidence" value="ECO:0007669"/>
    <property type="project" value="UniProtKB-KW"/>
</dbReference>
<dbReference type="GO" id="GO:0008121">
    <property type="term" value="F:ubiquinol-cytochrome-c reductase activity"/>
    <property type="evidence" value="ECO:0007669"/>
    <property type="project" value="InterPro"/>
</dbReference>
<dbReference type="GO" id="GO:0006122">
    <property type="term" value="P:mitochondrial electron transport, ubiquinol to cytochrome c"/>
    <property type="evidence" value="ECO:0007669"/>
    <property type="project" value="TreeGrafter"/>
</dbReference>
<dbReference type="CDD" id="cd00290">
    <property type="entry name" value="cytochrome_b_C"/>
    <property type="match status" value="1"/>
</dbReference>
<dbReference type="CDD" id="cd00284">
    <property type="entry name" value="Cytochrome_b_N"/>
    <property type="match status" value="1"/>
</dbReference>
<dbReference type="FunFam" id="1.20.810.10:FF:000002">
    <property type="entry name" value="Cytochrome b"/>
    <property type="match status" value="1"/>
</dbReference>
<dbReference type="Gene3D" id="1.20.810.10">
    <property type="entry name" value="Cytochrome Bc1 Complex, Chain C"/>
    <property type="match status" value="1"/>
</dbReference>
<dbReference type="InterPro" id="IPR005798">
    <property type="entry name" value="Cyt_b/b6_C"/>
</dbReference>
<dbReference type="InterPro" id="IPR036150">
    <property type="entry name" value="Cyt_b/b6_C_sf"/>
</dbReference>
<dbReference type="InterPro" id="IPR005797">
    <property type="entry name" value="Cyt_b/b6_N"/>
</dbReference>
<dbReference type="InterPro" id="IPR027387">
    <property type="entry name" value="Cytb/b6-like_sf"/>
</dbReference>
<dbReference type="InterPro" id="IPR030689">
    <property type="entry name" value="Cytochrome_b"/>
</dbReference>
<dbReference type="InterPro" id="IPR048260">
    <property type="entry name" value="Cytochrome_b_C_euk/bac"/>
</dbReference>
<dbReference type="InterPro" id="IPR048259">
    <property type="entry name" value="Cytochrome_b_N_euk/bac"/>
</dbReference>
<dbReference type="InterPro" id="IPR016174">
    <property type="entry name" value="Di-haem_cyt_TM"/>
</dbReference>
<dbReference type="PANTHER" id="PTHR19271">
    <property type="entry name" value="CYTOCHROME B"/>
    <property type="match status" value="1"/>
</dbReference>
<dbReference type="PANTHER" id="PTHR19271:SF16">
    <property type="entry name" value="CYTOCHROME B"/>
    <property type="match status" value="1"/>
</dbReference>
<dbReference type="Pfam" id="PF00032">
    <property type="entry name" value="Cytochrom_B_C"/>
    <property type="match status" value="1"/>
</dbReference>
<dbReference type="Pfam" id="PF00033">
    <property type="entry name" value="Cytochrome_B"/>
    <property type="match status" value="1"/>
</dbReference>
<dbReference type="PIRSF" id="PIRSF038885">
    <property type="entry name" value="COB"/>
    <property type="match status" value="1"/>
</dbReference>
<dbReference type="SUPFAM" id="SSF81648">
    <property type="entry name" value="a domain/subunit of cytochrome bc1 complex (Ubiquinol-cytochrome c reductase)"/>
    <property type="match status" value="1"/>
</dbReference>
<dbReference type="SUPFAM" id="SSF81342">
    <property type="entry name" value="Transmembrane di-heme cytochromes"/>
    <property type="match status" value="1"/>
</dbReference>
<dbReference type="PROSITE" id="PS51003">
    <property type="entry name" value="CYTB_CTER"/>
    <property type="match status" value="1"/>
</dbReference>
<dbReference type="PROSITE" id="PS51002">
    <property type="entry name" value="CYTB_NTER"/>
    <property type="match status" value="1"/>
</dbReference>
<accession>Q8WEK2</accession>
<feature type="chain" id="PRO_0000061662" description="Cytochrome b">
    <location>
        <begin position="1"/>
        <end position="379"/>
    </location>
</feature>
<feature type="transmembrane region" description="Helical" evidence="2">
    <location>
        <begin position="33"/>
        <end position="53"/>
    </location>
</feature>
<feature type="transmembrane region" description="Helical" evidence="2">
    <location>
        <begin position="77"/>
        <end position="98"/>
    </location>
</feature>
<feature type="transmembrane region" description="Helical" evidence="2">
    <location>
        <begin position="113"/>
        <end position="133"/>
    </location>
</feature>
<feature type="transmembrane region" description="Helical" evidence="2">
    <location>
        <begin position="178"/>
        <end position="198"/>
    </location>
</feature>
<feature type="transmembrane region" description="Helical" evidence="2">
    <location>
        <begin position="226"/>
        <end position="246"/>
    </location>
</feature>
<feature type="transmembrane region" description="Helical" evidence="2">
    <location>
        <begin position="288"/>
        <end position="308"/>
    </location>
</feature>
<feature type="transmembrane region" description="Helical" evidence="2">
    <location>
        <begin position="320"/>
        <end position="340"/>
    </location>
</feature>
<feature type="transmembrane region" description="Helical" evidence="2">
    <location>
        <begin position="347"/>
        <end position="367"/>
    </location>
</feature>
<feature type="binding site" description="axial binding residue" evidence="2">
    <location>
        <position position="83"/>
    </location>
    <ligand>
        <name>heme b</name>
        <dbReference type="ChEBI" id="CHEBI:60344"/>
        <label>b562</label>
    </ligand>
    <ligandPart>
        <name>Fe</name>
        <dbReference type="ChEBI" id="CHEBI:18248"/>
    </ligandPart>
</feature>
<feature type="binding site" description="axial binding residue" evidence="2">
    <location>
        <position position="97"/>
    </location>
    <ligand>
        <name>heme b</name>
        <dbReference type="ChEBI" id="CHEBI:60344"/>
        <label>b566</label>
    </ligand>
    <ligandPart>
        <name>Fe</name>
        <dbReference type="ChEBI" id="CHEBI:18248"/>
    </ligandPart>
</feature>
<feature type="binding site" description="axial binding residue" evidence="2">
    <location>
        <position position="182"/>
    </location>
    <ligand>
        <name>heme b</name>
        <dbReference type="ChEBI" id="CHEBI:60344"/>
        <label>b562</label>
    </ligand>
    <ligandPart>
        <name>Fe</name>
        <dbReference type="ChEBI" id="CHEBI:18248"/>
    </ligandPart>
</feature>
<feature type="binding site" description="axial binding residue" evidence="2">
    <location>
        <position position="196"/>
    </location>
    <ligand>
        <name>heme b</name>
        <dbReference type="ChEBI" id="CHEBI:60344"/>
        <label>b566</label>
    </ligand>
    <ligandPart>
        <name>Fe</name>
        <dbReference type="ChEBI" id="CHEBI:18248"/>
    </ligandPart>
</feature>
<feature type="binding site" evidence="2">
    <location>
        <position position="201"/>
    </location>
    <ligand>
        <name>a ubiquinone</name>
        <dbReference type="ChEBI" id="CHEBI:16389"/>
    </ligand>
</feature>
<name>CYB_THOMO</name>
<proteinExistence type="inferred from homology"/>
<comment type="function">
    <text evidence="2">Component of the ubiquinol-cytochrome c reductase complex (complex III or cytochrome b-c1 complex) that is part of the mitochondrial respiratory chain. The b-c1 complex mediates electron transfer from ubiquinol to cytochrome c. Contributes to the generation of a proton gradient across the mitochondrial membrane that is then used for ATP synthesis.</text>
</comment>
<comment type="cofactor">
    <cofactor evidence="2">
        <name>heme b</name>
        <dbReference type="ChEBI" id="CHEBI:60344"/>
    </cofactor>
    <text evidence="2">Binds 2 heme b groups non-covalently.</text>
</comment>
<comment type="subunit">
    <text evidence="2">The cytochrome bc1 complex contains 11 subunits: 3 respiratory subunits (MT-CYB, CYC1 and UQCRFS1), 2 core proteins (UQCRC1 and UQCRC2) and 6 low-molecular weight proteins (UQCRH/QCR6, UQCRB/QCR7, UQCRQ/QCR8, UQCR10/QCR9, UQCR11/QCR10 and a cleavage product of UQCRFS1). This cytochrome bc1 complex then forms a dimer.</text>
</comment>
<comment type="subcellular location">
    <subcellularLocation>
        <location evidence="2">Mitochondrion inner membrane</location>
        <topology evidence="2">Multi-pass membrane protein</topology>
    </subcellularLocation>
</comment>
<comment type="miscellaneous">
    <text evidence="1">Heme 1 (or BL or b562) is low-potential and absorbs at about 562 nm, and heme 2 (or BH or b566) is high-potential and absorbs at about 566 nm.</text>
</comment>
<comment type="similarity">
    <text evidence="3 4">Belongs to the cytochrome b family.</text>
</comment>
<comment type="caution">
    <text evidence="2">The full-length protein contains only eight transmembrane helices, not nine as predicted by bioinformatics tools.</text>
</comment>
<organism>
    <name type="scientific">Thomomys monticola</name>
    <name type="common">Mountain pocket gopher</name>
    <dbReference type="NCBI Taxonomy" id="50724"/>
    <lineage>
        <taxon>Eukaryota</taxon>
        <taxon>Metazoa</taxon>
        <taxon>Chordata</taxon>
        <taxon>Craniata</taxon>
        <taxon>Vertebrata</taxon>
        <taxon>Euteleostomi</taxon>
        <taxon>Mammalia</taxon>
        <taxon>Eutheria</taxon>
        <taxon>Euarchontoglires</taxon>
        <taxon>Glires</taxon>
        <taxon>Rodentia</taxon>
        <taxon>Castorimorpha</taxon>
        <taxon>Geomyidae</taxon>
        <taxon>Thomomys</taxon>
    </lineage>
</organism>
<sequence>MTIMRKSHPLLKIVNHVFIDLPTPPNISGLWNFGSLLGMCLILQILTGLFLAMHYTSDTLTAFSSVTHICRDVNYGWLIRYMHANGASLFFICLYIHIGRGIYYGSYLYKETWNIGILLLFLTMATAFVGYVLPWGQMSFWGATVITNLLSAIPYIGQDLVEWIWGGFSVDKATLTRFFAFHFILPFIIAALAMVHLLFLHETGSNNPLGIMSDCNKIPFHPYYTTKDFLGVILLLLLFLSLVLFFPDKLGDPDNYMPANPLNTPPHIKPEWYFLFAYAILRSIPNKLGGVIALVLSILILALLPYLHTSNQRSMMFRPLSQSLFWILVSDLLLLTWIGGQPVEPPFIIIGQLASILYFLTILVLLPMAGLIENKLLKW</sequence>
<geneLocation type="mitochondrion"/>
<evidence type="ECO:0000250" key="1"/>
<evidence type="ECO:0000250" key="2">
    <source>
        <dbReference type="UniProtKB" id="P00157"/>
    </source>
</evidence>
<evidence type="ECO:0000255" key="3">
    <source>
        <dbReference type="PROSITE-ProRule" id="PRU00967"/>
    </source>
</evidence>
<evidence type="ECO:0000255" key="4">
    <source>
        <dbReference type="PROSITE-ProRule" id="PRU00968"/>
    </source>
</evidence>
<gene>
    <name type="primary">MT-CYB</name>
    <name type="synonym">COB</name>
    <name type="synonym">CYTB</name>
    <name type="synonym">MTCYB</name>
</gene>
<protein>
    <recommendedName>
        <fullName>Cytochrome b</fullName>
    </recommendedName>
    <alternativeName>
        <fullName>Complex III subunit 3</fullName>
    </alternativeName>
    <alternativeName>
        <fullName>Complex III subunit III</fullName>
    </alternativeName>
    <alternativeName>
        <fullName>Cytochrome b-c1 complex subunit 3</fullName>
    </alternativeName>
    <alternativeName>
        <fullName>Ubiquinol-cytochrome-c reductase complex cytochrome b subunit</fullName>
    </alternativeName>
</protein>
<reference key="1">
    <citation type="submission" date="1999-12" db="EMBL/GenBank/DDBJ databases">
        <title>Phylogeographic relationships of Pacific northwestern pocket gophers (Thomomys mazama) inferred from mitochondrial and nuclear cytochrome b sequences.</title>
        <authorList>
            <person name="Steinberg E.K."/>
        </authorList>
    </citation>
    <scope>NUCLEOTIDE SEQUENCE [GENOMIC DNA]</scope>
    <source>
        <strain>Isolate PAG17</strain>
    </source>
</reference>